<evidence type="ECO:0000255" key="1">
    <source>
        <dbReference type="HAMAP-Rule" id="MF_00323"/>
    </source>
</evidence>
<evidence type="ECO:0000305" key="2"/>
<keyword id="KW-0963">Cytoplasm</keyword>
<keyword id="KW-0350">Heme biosynthesis</keyword>
<keyword id="KW-0408">Iron</keyword>
<keyword id="KW-0456">Lyase</keyword>
<keyword id="KW-0479">Metal-binding</keyword>
<keyword id="KW-0627">Porphyrin biosynthesis</keyword>
<keyword id="KW-1185">Reference proteome</keyword>
<reference key="1">
    <citation type="journal article" date="1992" name="J. Bacteriol.">
        <title>Characterization of a Bradyrhizobium japonicum ferrochelatase mutant and isolation of the hemH gene.</title>
        <authorList>
            <person name="Frustaci J.M."/>
            <person name="O'Brian M.R."/>
        </authorList>
    </citation>
    <scope>NUCLEOTIDE SEQUENCE [GENOMIC DNA]</scope>
    <source>
        <strain>LO</strain>
    </source>
</reference>
<reference key="2">
    <citation type="submission" date="2000-02" db="EMBL/GenBank/DDBJ databases">
        <authorList>
            <person name="O'Brian M."/>
        </authorList>
    </citation>
    <scope>SEQUENCE REVISION</scope>
</reference>
<reference key="3">
    <citation type="journal article" date="2002" name="DNA Res.">
        <title>Complete genomic sequence of nitrogen-fixing symbiotic bacterium Bradyrhizobium japonicum USDA110.</title>
        <authorList>
            <person name="Kaneko T."/>
            <person name="Nakamura Y."/>
            <person name="Sato S."/>
            <person name="Minamisawa K."/>
            <person name="Uchiumi T."/>
            <person name="Sasamoto S."/>
            <person name="Watanabe A."/>
            <person name="Idesawa K."/>
            <person name="Iriguchi M."/>
            <person name="Kawashima K."/>
            <person name="Kohara M."/>
            <person name="Matsumoto M."/>
            <person name="Shimpo S."/>
            <person name="Tsuruoka H."/>
            <person name="Wada T."/>
            <person name="Yamada M."/>
            <person name="Tabata S."/>
        </authorList>
    </citation>
    <scope>NUCLEOTIDE SEQUENCE [LARGE SCALE GENOMIC DNA]</scope>
    <source>
        <strain>JCM 10833 / BCRC 13528 / IAM 13628 / NBRC 14792 / USDA 110</strain>
    </source>
</reference>
<feature type="chain" id="PRO_0000175119" description="Ferrochelatase">
    <location>
        <begin position="1"/>
        <end position="345"/>
    </location>
</feature>
<feature type="binding site" evidence="1">
    <location>
        <position position="215"/>
    </location>
    <ligand>
        <name>Fe cation</name>
        <dbReference type="ChEBI" id="CHEBI:24875"/>
    </ligand>
</feature>
<feature type="binding site" evidence="1">
    <location>
        <position position="296"/>
    </location>
    <ligand>
        <name>Fe cation</name>
        <dbReference type="ChEBI" id="CHEBI:24875"/>
    </ligand>
</feature>
<feature type="sequence conflict" description="In Ref. 1; AAA26217." evidence="2" ref="1">
    <original>Q</original>
    <variation>R</variation>
    <location>
        <position position="15"/>
    </location>
</feature>
<feature type="sequence conflict" description="In Ref. 1; AAA26217." evidence="2" ref="1">
    <original>T</original>
    <variation>S</variation>
    <location>
        <position position="75"/>
    </location>
</feature>
<comment type="function">
    <text>Catalyzes the ferrous insertion into protoporphyrin IX. Essential for normal nodule development.</text>
</comment>
<comment type="catalytic activity">
    <reaction evidence="1">
        <text>heme b + 2 H(+) = protoporphyrin IX + Fe(2+)</text>
        <dbReference type="Rhea" id="RHEA:22584"/>
        <dbReference type="ChEBI" id="CHEBI:15378"/>
        <dbReference type="ChEBI" id="CHEBI:29033"/>
        <dbReference type="ChEBI" id="CHEBI:57306"/>
        <dbReference type="ChEBI" id="CHEBI:60344"/>
        <dbReference type="EC" id="4.98.1.1"/>
    </reaction>
</comment>
<comment type="pathway">
    <text evidence="1">Porphyrin-containing compound metabolism; protoheme biosynthesis; protoheme from protoporphyrin-IX: step 1/1.</text>
</comment>
<comment type="subcellular location">
    <subcellularLocation>
        <location evidence="1">Cytoplasm</location>
    </subcellularLocation>
</comment>
<comment type="similarity">
    <text evidence="1 2">Belongs to the ferrochelatase family.</text>
</comment>
<dbReference type="EC" id="4.98.1.1" evidence="1"/>
<dbReference type="EMBL" id="M92427">
    <property type="protein sequence ID" value="AAA26217.2"/>
    <property type="molecule type" value="Genomic_DNA"/>
</dbReference>
<dbReference type="EMBL" id="BA000040">
    <property type="protein sequence ID" value="BAC53017.1"/>
    <property type="molecule type" value="Genomic_DNA"/>
</dbReference>
<dbReference type="PIR" id="A42883">
    <property type="entry name" value="A42883"/>
</dbReference>
<dbReference type="RefSeq" id="NP_774392.1">
    <property type="nucleotide sequence ID" value="NC_004463.1"/>
</dbReference>
<dbReference type="RefSeq" id="WP_011090477.1">
    <property type="nucleotide sequence ID" value="NC_004463.1"/>
</dbReference>
<dbReference type="SMR" id="P28602"/>
<dbReference type="FunCoup" id="P28602">
    <property type="interactions" value="650"/>
</dbReference>
<dbReference type="STRING" id="224911.AAV28_36460"/>
<dbReference type="EnsemblBacteria" id="BAC53017">
    <property type="protein sequence ID" value="BAC53017"/>
    <property type="gene ID" value="BAC53017"/>
</dbReference>
<dbReference type="GeneID" id="46494683"/>
<dbReference type="KEGG" id="bja:bll7752"/>
<dbReference type="PATRIC" id="fig|224911.44.peg.7894"/>
<dbReference type="eggNOG" id="COG0276">
    <property type="taxonomic scope" value="Bacteria"/>
</dbReference>
<dbReference type="HOGENOM" id="CLU_018884_0_0_5"/>
<dbReference type="InParanoid" id="P28602"/>
<dbReference type="OrthoDB" id="9809741at2"/>
<dbReference type="PhylomeDB" id="P28602"/>
<dbReference type="UniPathway" id="UPA00252">
    <property type="reaction ID" value="UER00325"/>
</dbReference>
<dbReference type="Proteomes" id="UP000002526">
    <property type="component" value="Chromosome"/>
</dbReference>
<dbReference type="GO" id="GO:0005737">
    <property type="term" value="C:cytoplasm"/>
    <property type="evidence" value="ECO:0007669"/>
    <property type="project" value="UniProtKB-SubCell"/>
</dbReference>
<dbReference type="GO" id="GO:0004325">
    <property type="term" value="F:ferrochelatase activity"/>
    <property type="evidence" value="ECO:0000318"/>
    <property type="project" value="GO_Central"/>
</dbReference>
<dbReference type="GO" id="GO:0046872">
    <property type="term" value="F:metal ion binding"/>
    <property type="evidence" value="ECO:0007669"/>
    <property type="project" value="UniProtKB-KW"/>
</dbReference>
<dbReference type="GO" id="GO:0006783">
    <property type="term" value="P:heme biosynthetic process"/>
    <property type="evidence" value="ECO:0000318"/>
    <property type="project" value="GO_Central"/>
</dbReference>
<dbReference type="CDD" id="cd00419">
    <property type="entry name" value="Ferrochelatase_C"/>
    <property type="match status" value="1"/>
</dbReference>
<dbReference type="CDD" id="cd03411">
    <property type="entry name" value="Ferrochelatase_N"/>
    <property type="match status" value="1"/>
</dbReference>
<dbReference type="FunFam" id="3.40.50.1400:FF:000002">
    <property type="entry name" value="Ferrochelatase"/>
    <property type="match status" value="1"/>
</dbReference>
<dbReference type="Gene3D" id="3.40.50.1400">
    <property type="match status" value="2"/>
</dbReference>
<dbReference type="HAMAP" id="MF_00323">
    <property type="entry name" value="Ferrochelatase"/>
    <property type="match status" value="1"/>
</dbReference>
<dbReference type="InterPro" id="IPR001015">
    <property type="entry name" value="Ferrochelatase"/>
</dbReference>
<dbReference type="InterPro" id="IPR019772">
    <property type="entry name" value="Ferrochelatase_AS"/>
</dbReference>
<dbReference type="InterPro" id="IPR033644">
    <property type="entry name" value="Ferrochelatase_C"/>
</dbReference>
<dbReference type="InterPro" id="IPR033659">
    <property type="entry name" value="Ferrochelatase_N"/>
</dbReference>
<dbReference type="NCBIfam" id="TIGR00109">
    <property type="entry name" value="hemH"/>
    <property type="match status" value="1"/>
</dbReference>
<dbReference type="PANTHER" id="PTHR11108">
    <property type="entry name" value="FERROCHELATASE"/>
    <property type="match status" value="1"/>
</dbReference>
<dbReference type="PANTHER" id="PTHR11108:SF1">
    <property type="entry name" value="FERROCHELATASE, MITOCHONDRIAL"/>
    <property type="match status" value="1"/>
</dbReference>
<dbReference type="Pfam" id="PF00762">
    <property type="entry name" value="Ferrochelatase"/>
    <property type="match status" value="1"/>
</dbReference>
<dbReference type="SUPFAM" id="SSF53800">
    <property type="entry name" value="Chelatase"/>
    <property type="match status" value="1"/>
</dbReference>
<dbReference type="PROSITE" id="PS00534">
    <property type="entry name" value="FERROCHELATASE"/>
    <property type="match status" value="1"/>
</dbReference>
<organism>
    <name type="scientific">Bradyrhizobium diazoefficiens (strain JCM 10833 / BCRC 13528 / IAM 13628 / NBRC 14792 / USDA 110)</name>
    <dbReference type="NCBI Taxonomy" id="224911"/>
    <lineage>
        <taxon>Bacteria</taxon>
        <taxon>Pseudomonadati</taxon>
        <taxon>Pseudomonadota</taxon>
        <taxon>Alphaproteobacteria</taxon>
        <taxon>Hyphomicrobiales</taxon>
        <taxon>Nitrobacteraceae</taxon>
        <taxon>Bradyrhizobium</taxon>
    </lineage>
</organism>
<gene>
    <name evidence="1" type="primary">hemH</name>
    <name type="ordered locus">bll7752</name>
</gene>
<accession>P28602</accession>
<protein>
    <recommendedName>
        <fullName evidence="1">Ferrochelatase</fullName>
        <ecNumber evidence="1">4.98.1.1</ecNumber>
    </recommendedName>
    <alternativeName>
        <fullName evidence="1">Heme synthase</fullName>
    </alternativeName>
    <alternativeName>
        <fullName evidence="1">Protoheme ferro-lyase</fullName>
    </alternativeName>
</protein>
<name>HEMH_BRADU</name>
<sequence>MSTAAPNETTQPTVQSGQKRVGVLLVNLGTPDTADAPGVRVYLKEFLSDARVIEDQGLVWKVVLNGIILRSRPRTKALDYQKIWNNEKNESPLKTITRSQSDKLAAALSDRDHVVVDWAMRYGNPSIKSGIDALIAEGCDRILAVPLYPQYSASTSATVCDEVFRVLARLRAQPTLRVTPPYYEDEAYIEALAVSIETHLATLPFKPELIVASFHGMPKSYVDKGDPYQEHCIATTEALRRRLGVDASKLLLTFQSRFGNDEWLQPYTDKTMERLAKEGVRRIAVVTPGFAADCLETLEEIAQENAEIFKHNGGEQFSAIPCLNDSEPGMDVIRTLVLRELQGWI</sequence>
<proteinExistence type="inferred from homology"/>